<proteinExistence type="inferred from homology"/>
<sequence>MPLLDSFTVDHTRMEAPAVRVAKTMNTPHGDAITVFDLRFCVPNKEVMPERGIHTLEHLFAGFMRNHLNGNGVEIIDISPMGCRTGFYMSLIGTPDEQRVADAWKAAMEDVLKVQDQNQIPELNVYQCGTYQMHSLQEAQDIARSILERDVRINSNEELALPKEKLQELHI</sequence>
<protein>
    <recommendedName>
        <fullName evidence="1">S-ribosylhomocysteine lyase</fullName>
        <ecNumber evidence="1">4.4.1.21</ecNumber>
    </recommendedName>
    <alternativeName>
        <fullName evidence="1">AI-2 synthesis protein</fullName>
    </alternativeName>
    <alternativeName>
        <fullName evidence="1">Autoinducer-2 production protein LuxS</fullName>
    </alternativeName>
</protein>
<evidence type="ECO:0000255" key="1">
    <source>
        <dbReference type="HAMAP-Rule" id="MF_00091"/>
    </source>
</evidence>
<keyword id="KW-0071">Autoinducer synthesis</keyword>
<keyword id="KW-0408">Iron</keyword>
<keyword id="KW-0456">Lyase</keyword>
<keyword id="KW-0479">Metal-binding</keyword>
<keyword id="KW-0673">Quorum sensing</keyword>
<keyword id="KW-1185">Reference proteome</keyword>
<reference key="1">
    <citation type="journal article" date="2009" name="PLoS Genet.">
        <title>Organised genome dynamics in the Escherichia coli species results in highly diverse adaptive paths.</title>
        <authorList>
            <person name="Touchon M."/>
            <person name="Hoede C."/>
            <person name="Tenaillon O."/>
            <person name="Barbe V."/>
            <person name="Baeriswyl S."/>
            <person name="Bidet P."/>
            <person name="Bingen E."/>
            <person name="Bonacorsi S."/>
            <person name="Bouchier C."/>
            <person name="Bouvet O."/>
            <person name="Calteau A."/>
            <person name="Chiapello H."/>
            <person name="Clermont O."/>
            <person name="Cruveiller S."/>
            <person name="Danchin A."/>
            <person name="Diard M."/>
            <person name="Dossat C."/>
            <person name="Karoui M.E."/>
            <person name="Frapy E."/>
            <person name="Garry L."/>
            <person name="Ghigo J.M."/>
            <person name="Gilles A.M."/>
            <person name="Johnson J."/>
            <person name="Le Bouguenec C."/>
            <person name="Lescat M."/>
            <person name="Mangenot S."/>
            <person name="Martinez-Jehanne V."/>
            <person name="Matic I."/>
            <person name="Nassif X."/>
            <person name="Oztas S."/>
            <person name="Petit M.A."/>
            <person name="Pichon C."/>
            <person name="Rouy Z."/>
            <person name="Ruf C.S."/>
            <person name="Schneider D."/>
            <person name="Tourret J."/>
            <person name="Vacherie B."/>
            <person name="Vallenet D."/>
            <person name="Medigue C."/>
            <person name="Rocha E.P.C."/>
            <person name="Denamur E."/>
        </authorList>
    </citation>
    <scope>NUCLEOTIDE SEQUENCE [LARGE SCALE GENOMIC DNA]</scope>
    <source>
        <strain>S88 / ExPEC</strain>
    </source>
</reference>
<name>LUXS_ECO45</name>
<dbReference type="EC" id="4.4.1.21" evidence="1"/>
<dbReference type="EMBL" id="CU928161">
    <property type="protein sequence ID" value="CAR04201.1"/>
    <property type="molecule type" value="Genomic_DNA"/>
</dbReference>
<dbReference type="RefSeq" id="WP_001130211.1">
    <property type="nucleotide sequence ID" value="NC_011742.1"/>
</dbReference>
<dbReference type="SMR" id="B7MKG1"/>
<dbReference type="GeneID" id="93779324"/>
<dbReference type="KEGG" id="ecz:ECS88_2954"/>
<dbReference type="HOGENOM" id="CLU_107531_2_0_6"/>
<dbReference type="Proteomes" id="UP000000747">
    <property type="component" value="Chromosome"/>
</dbReference>
<dbReference type="GO" id="GO:0005506">
    <property type="term" value="F:iron ion binding"/>
    <property type="evidence" value="ECO:0007669"/>
    <property type="project" value="InterPro"/>
</dbReference>
<dbReference type="GO" id="GO:0043768">
    <property type="term" value="F:S-ribosylhomocysteine lyase activity"/>
    <property type="evidence" value="ECO:0007669"/>
    <property type="project" value="UniProtKB-UniRule"/>
</dbReference>
<dbReference type="GO" id="GO:0009372">
    <property type="term" value="P:quorum sensing"/>
    <property type="evidence" value="ECO:0007669"/>
    <property type="project" value="UniProtKB-UniRule"/>
</dbReference>
<dbReference type="FunFam" id="3.30.1360.80:FF:000001">
    <property type="entry name" value="S-ribosylhomocysteine lyase"/>
    <property type="match status" value="1"/>
</dbReference>
<dbReference type="Gene3D" id="3.30.1360.80">
    <property type="entry name" value="S-ribosylhomocysteinase (LuxS)"/>
    <property type="match status" value="1"/>
</dbReference>
<dbReference type="HAMAP" id="MF_00091">
    <property type="entry name" value="LuxS"/>
    <property type="match status" value="1"/>
</dbReference>
<dbReference type="InterPro" id="IPR037005">
    <property type="entry name" value="LuxS_sf"/>
</dbReference>
<dbReference type="InterPro" id="IPR011249">
    <property type="entry name" value="Metalloenz_LuxS/M16"/>
</dbReference>
<dbReference type="InterPro" id="IPR003815">
    <property type="entry name" value="S-ribosylhomocysteinase"/>
</dbReference>
<dbReference type="NCBIfam" id="NF002602">
    <property type="entry name" value="PRK02260.1-2"/>
    <property type="match status" value="1"/>
</dbReference>
<dbReference type="PANTHER" id="PTHR35799">
    <property type="entry name" value="S-RIBOSYLHOMOCYSTEINE LYASE"/>
    <property type="match status" value="1"/>
</dbReference>
<dbReference type="PANTHER" id="PTHR35799:SF1">
    <property type="entry name" value="S-RIBOSYLHOMOCYSTEINE LYASE"/>
    <property type="match status" value="1"/>
</dbReference>
<dbReference type="Pfam" id="PF02664">
    <property type="entry name" value="LuxS"/>
    <property type="match status" value="1"/>
</dbReference>
<dbReference type="PIRSF" id="PIRSF006160">
    <property type="entry name" value="AI2"/>
    <property type="match status" value="1"/>
</dbReference>
<dbReference type="PRINTS" id="PR01487">
    <property type="entry name" value="LUXSPROTEIN"/>
</dbReference>
<dbReference type="SUPFAM" id="SSF63411">
    <property type="entry name" value="LuxS/MPP-like metallohydrolase"/>
    <property type="match status" value="1"/>
</dbReference>
<comment type="function">
    <text evidence="1">Involved in the synthesis of autoinducer 2 (AI-2) which is secreted by bacteria and is used to communicate both the cell density and the metabolic potential of the environment. The regulation of gene expression in response to changes in cell density is called quorum sensing. Catalyzes the transformation of S-ribosylhomocysteine (RHC) to homocysteine (HC) and 4,5-dihydroxy-2,3-pentadione (DPD).</text>
</comment>
<comment type="catalytic activity">
    <reaction evidence="1">
        <text>S-(5-deoxy-D-ribos-5-yl)-L-homocysteine = (S)-4,5-dihydroxypentane-2,3-dione + L-homocysteine</text>
        <dbReference type="Rhea" id="RHEA:17753"/>
        <dbReference type="ChEBI" id="CHEBI:29484"/>
        <dbReference type="ChEBI" id="CHEBI:58195"/>
        <dbReference type="ChEBI" id="CHEBI:58199"/>
        <dbReference type="EC" id="4.4.1.21"/>
    </reaction>
</comment>
<comment type="cofactor">
    <cofactor evidence="1">
        <name>Fe cation</name>
        <dbReference type="ChEBI" id="CHEBI:24875"/>
    </cofactor>
    <text evidence="1">Binds 1 Fe cation per subunit.</text>
</comment>
<comment type="subunit">
    <text evidence="1">Homodimer.</text>
</comment>
<comment type="similarity">
    <text evidence="1">Belongs to the LuxS family.</text>
</comment>
<organism>
    <name type="scientific">Escherichia coli O45:K1 (strain S88 / ExPEC)</name>
    <dbReference type="NCBI Taxonomy" id="585035"/>
    <lineage>
        <taxon>Bacteria</taxon>
        <taxon>Pseudomonadati</taxon>
        <taxon>Pseudomonadota</taxon>
        <taxon>Gammaproteobacteria</taxon>
        <taxon>Enterobacterales</taxon>
        <taxon>Enterobacteriaceae</taxon>
        <taxon>Escherichia</taxon>
    </lineage>
</organism>
<feature type="chain" id="PRO_1000117217" description="S-ribosylhomocysteine lyase">
    <location>
        <begin position="1"/>
        <end position="171"/>
    </location>
</feature>
<feature type="binding site" evidence="1">
    <location>
        <position position="54"/>
    </location>
    <ligand>
        <name>Fe cation</name>
        <dbReference type="ChEBI" id="CHEBI:24875"/>
    </ligand>
</feature>
<feature type="binding site" evidence="1">
    <location>
        <position position="58"/>
    </location>
    <ligand>
        <name>Fe cation</name>
        <dbReference type="ChEBI" id="CHEBI:24875"/>
    </ligand>
</feature>
<feature type="binding site" evidence="1">
    <location>
        <position position="128"/>
    </location>
    <ligand>
        <name>Fe cation</name>
        <dbReference type="ChEBI" id="CHEBI:24875"/>
    </ligand>
</feature>
<accession>B7MKG1</accession>
<gene>
    <name evidence="1" type="primary">luxS</name>
    <name type="ordered locus">ECS88_2954</name>
</gene>